<evidence type="ECO:0000255" key="1">
    <source>
        <dbReference type="HAMAP-Rule" id="MF_00394"/>
    </source>
</evidence>
<organism>
    <name type="scientific">Exiguobacterium sp. (strain ATCC BAA-1283 / AT1b)</name>
    <dbReference type="NCBI Taxonomy" id="360911"/>
    <lineage>
        <taxon>Bacteria</taxon>
        <taxon>Bacillati</taxon>
        <taxon>Bacillota</taxon>
        <taxon>Bacilli</taxon>
        <taxon>Bacillales</taxon>
        <taxon>Bacillales Family XII. Incertae Sedis</taxon>
        <taxon>Exiguobacterium</taxon>
    </lineage>
</organism>
<proteinExistence type="inferred from homology"/>
<reference key="1">
    <citation type="journal article" date="2011" name="J. Bacteriol.">
        <title>Complete genome sequence of the Thermophilic Bacterium Exiguobacterium sp. AT1b.</title>
        <authorList>
            <person name="Vishnivetskaya T.A."/>
            <person name="Lucas S."/>
            <person name="Copeland A."/>
            <person name="Lapidus A."/>
            <person name="Glavina del Rio T."/>
            <person name="Dalin E."/>
            <person name="Tice H."/>
            <person name="Bruce D.C."/>
            <person name="Goodwin L.A."/>
            <person name="Pitluck S."/>
            <person name="Saunders E."/>
            <person name="Brettin T."/>
            <person name="Detter C."/>
            <person name="Han C."/>
            <person name="Larimer F."/>
            <person name="Land M.L."/>
            <person name="Hauser L.J."/>
            <person name="Kyrpides N.C."/>
            <person name="Ovchinnikova G."/>
            <person name="Kathariou S."/>
            <person name="Ramaley R.F."/>
            <person name="Rodrigues D.F."/>
            <person name="Hendrix C."/>
            <person name="Richardson P."/>
            <person name="Tiedje J.M."/>
        </authorList>
    </citation>
    <scope>NUCLEOTIDE SEQUENCE [LARGE SCALE GENOMIC DNA]</scope>
    <source>
        <strain>ATCC BAA-1283 / AT1b</strain>
    </source>
</reference>
<feature type="chain" id="PRO_1000205860" description="Glycerol-3-phosphate dehydrogenase [NAD(P)+]">
    <location>
        <begin position="1"/>
        <end position="341"/>
    </location>
</feature>
<feature type="active site" description="Proton acceptor" evidence="1">
    <location>
        <position position="192"/>
    </location>
</feature>
<feature type="binding site" evidence="1">
    <location>
        <position position="11"/>
    </location>
    <ligand>
        <name>NADPH</name>
        <dbReference type="ChEBI" id="CHEBI:57783"/>
    </ligand>
</feature>
<feature type="binding site" evidence="1">
    <location>
        <position position="12"/>
    </location>
    <ligand>
        <name>NADPH</name>
        <dbReference type="ChEBI" id="CHEBI:57783"/>
    </ligand>
</feature>
<feature type="binding site" evidence="1">
    <location>
        <position position="32"/>
    </location>
    <ligand>
        <name>NADPH</name>
        <dbReference type="ChEBI" id="CHEBI:57783"/>
    </ligand>
</feature>
<feature type="binding site" evidence="1">
    <location>
        <position position="106"/>
    </location>
    <ligand>
        <name>NADPH</name>
        <dbReference type="ChEBI" id="CHEBI:57783"/>
    </ligand>
</feature>
<feature type="binding site" evidence="1">
    <location>
        <position position="106"/>
    </location>
    <ligand>
        <name>sn-glycerol 3-phosphate</name>
        <dbReference type="ChEBI" id="CHEBI:57597"/>
    </ligand>
</feature>
<feature type="binding site" evidence="1">
    <location>
        <position position="137"/>
    </location>
    <ligand>
        <name>sn-glycerol 3-phosphate</name>
        <dbReference type="ChEBI" id="CHEBI:57597"/>
    </ligand>
</feature>
<feature type="binding site" evidence="1">
    <location>
        <position position="139"/>
    </location>
    <ligand>
        <name>sn-glycerol 3-phosphate</name>
        <dbReference type="ChEBI" id="CHEBI:57597"/>
    </ligand>
</feature>
<feature type="binding site" evidence="1">
    <location>
        <position position="141"/>
    </location>
    <ligand>
        <name>NADPH</name>
        <dbReference type="ChEBI" id="CHEBI:57783"/>
    </ligand>
</feature>
<feature type="binding site" evidence="1">
    <location>
        <position position="192"/>
    </location>
    <ligand>
        <name>sn-glycerol 3-phosphate</name>
        <dbReference type="ChEBI" id="CHEBI:57597"/>
    </ligand>
</feature>
<feature type="binding site" evidence="1">
    <location>
        <position position="245"/>
    </location>
    <ligand>
        <name>sn-glycerol 3-phosphate</name>
        <dbReference type="ChEBI" id="CHEBI:57597"/>
    </ligand>
</feature>
<feature type="binding site" evidence="1">
    <location>
        <position position="255"/>
    </location>
    <ligand>
        <name>sn-glycerol 3-phosphate</name>
        <dbReference type="ChEBI" id="CHEBI:57597"/>
    </ligand>
</feature>
<feature type="binding site" evidence="1">
    <location>
        <position position="256"/>
    </location>
    <ligand>
        <name>NADPH</name>
        <dbReference type="ChEBI" id="CHEBI:57783"/>
    </ligand>
</feature>
<feature type="binding site" evidence="1">
    <location>
        <position position="256"/>
    </location>
    <ligand>
        <name>sn-glycerol 3-phosphate</name>
        <dbReference type="ChEBI" id="CHEBI:57597"/>
    </ligand>
</feature>
<feature type="binding site" evidence="1">
    <location>
        <position position="257"/>
    </location>
    <ligand>
        <name>sn-glycerol 3-phosphate</name>
        <dbReference type="ChEBI" id="CHEBI:57597"/>
    </ligand>
</feature>
<feature type="binding site" evidence="1">
    <location>
        <position position="280"/>
    </location>
    <ligand>
        <name>NADPH</name>
        <dbReference type="ChEBI" id="CHEBI:57783"/>
    </ligand>
</feature>
<feature type="binding site" evidence="1">
    <location>
        <position position="282"/>
    </location>
    <ligand>
        <name>NADPH</name>
        <dbReference type="ChEBI" id="CHEBI:57783"/>
    </ligand>
</feature>
<accession>C4L6M4</accession>
<protein>
    <recommendedName>
        <fullName evidence="1">Glycerol-3-phosphate dehydrogenase [NAD(P)+]</fullName>
        <ecNumber evidence="1">1.1.1.94</ecNumber>
    </recommendedName>
    <alternativeName>
        <fullName evidence="1">NAD(P)(+)-dependent glycerol-3-phosphate dehydrogenase</fullName>
    </alternativeName>
    <alternativeName>
        <fullName evidence="1">NAD(P)H-dependent dihydroxyacetone-phosphate reductase</fullName>
    </alternativeName>
</protein>
<sequence length="341" mass="36629">MANVAVIGAGSWGTAISLVLADNGHDVLLYGREQEHVDEINSSHTNSFYLKDAPLPESIRATTNLKEALDGRSIVFLVVPSSAIRPVSKELNTLLTEPVTIVHAAKGIEPKTHERLSEIIAEEIEPAKRRAIGVLTGPTHAEEVAVRKPTTITIACADLDVADEVQELLTNDQFRVYLNSDVVGAEYGGALKNIIALAAGMTDGLGYGDNAKAALMTRGIVEIARLGVKLGANPASFSGLTGIGDLIVTATSQHSRNWRAGNAIGRGEKLEDVLGNMGMVVEGVRACEAAHSLAKEAGVEMPITEALYNVLFEGKSPHDEVKKLMRRPQKHEMEQVFHFEE</sequence>
<comment type="function">
    <text evidence="1">Catalyzes the reduction of the glycolytic intermediate dihydroxyacetone phosphate (DHAP) to sn-glycerol 3-phosphate (G3P), the key precursor for phospholipid synthesis.</text>
</comment>
<comment type="catalytic activity">
    <reaction evidence="1">
        <text>sn-glycerol 3-phosphate + NAD(+) = dihydroxyacetone phosphate + NADH + H(+)</text>
        <dbReference type="Rhea" id="RHEA:11092"/>
        <dbReference type="ChEBI" id="CHEBI:15378"/>
        <dbReference type="ChEBI" id="CHEBI:57540"/>
        <dbReference type="ChEBI" id="CHEBI:57597"/>
        <dbReference type="ChEBI" id="CHEBI:57642"/>
        <dbReference type="ChEBI" id="CHEBI:57945"/>
        <dbReference type="EC" id="1.1.1.94"/>
    </reaction>
    <physiologicalReaction direction="right-to-left" evidence="1">
        <dbReference type="Rhea" id="RHEA:11094"/>
    </physiologicalReaction>
</comment>
<comment type="catalytic activity">
    <reaction evidence="1">
        <text>sn-glycerol 3-phosphate + NADP(+) = dihydroxyacetone phosphate + NADPH + H(+)</text>
        <dbReference type="Rhea" id="RHEA:11096"/>
        <dbReference type="ChEBI" id="CHEBI:15378"/>
        <dbReference type="ChEBI" id="CHEBI:57597"/>
        <dbReference type="ChEBI" id="CHEBI:57642"/>
        <dbReference type="ChEBI" id="CHEBI:57783"/>
        <dbReference type="ChEBI" id="CHEBI:58349"/>
        <dbReference type="EC" id="1.1.1.94"/>
    </reaction>
    <physiologicalReaction direction="right-to-left" evidence="1">
        <dbReference type="Rhea" id="RHEA:11098"/>
    </physiologicalReaction>
</comment>
<comment type="pathway">
    <text evidence="1">Membrane lipid metabolism; glycerophospholipid metabolism.</text>
</comment>
<comment type="subcellular location">
    <subcellularLocation>
        <location evidence="1">Cytoplasm</location>
    </subcellularLocation>
</comment>
<comment type="similarity">
    <text evidence="1">Belongs to the NAD-dependent glycerol-3-phosphate dehydrogenase family.</text>
</comment>
<dbReference type="EC" id="1.1.1.94" evidence="1"/>
<dbReference type="EMBL" id="CP001615">
    <property type="protein sequence ID" value="ACQ71903.1"/>
    <property type="molecule type" value="Genomic_DNA"/>
</dbReference>
<dbReference type="RefSeq" id="WP_015881462.1">
    <property type="nucleotide sequence ID" value="NC_012673.1"/>
</dbReference>
<dbReference type="SMR" id="C4L6M4"/>
<dbReference type="STRING" id="360911.EAT1b_2989"/>
<dbReference type="KEGG" id="eat:EAT1b_2989"/>
<dbReference type="eggNOG" id="COG0240">
    <property type="taxonomic scope" value="Bacteria"/>
</dbReference>
<dbReference type="HOGENOM" id="CLU_033449_0_2_9"/>
<dbReference type="OrthoDB" id="9812273at2"/>
<dbReference type="UniPathway" id="UPA00940"/>
<dbReference type="Proteomes" id="UP000000716">
    <property type="component" value="Chromosome"/>
</dbReference>
<dbReference type="GO" id="GO:0005829">
    <property type="term" value="C:cytosol"/>
    <property type="evidence" value="ECO:0007669"/>
    <property type="project" value="TreeGrafter"/>
</dbReference>
<dbReference type="GO" id="GO:0047952">
    <property type="term" value="F:glycerol-3-phosphate dehydrogenase [NAD(P)+] activity"/>
    <property type="evidence" value="ECO:0007669"/>
    <property type="project" value="UniProtKB-UniRule"/>
</dbReference>
<dbReference type="GO" id="GO:0051287">
    <property type="term" value="F:NAD binding"/>
    <property type="evidence" value="ECO:0007669"/>
    <property type="project" value="InterPro"/>
</dbReference>
<dbReference type="GO" id="GO:0005975">
    <property type="term" value="P:carbohydrate metabolic process"/>
    <property type="evidence" value="ECO:0007669"/>
    <property type="project" value="InterPro"/>
</dbReference>
<dbReference type="GO" id="GO:0046167">
    <property type="term" value="P:glycerol-3-phosphate biosynthetic process"/>
    <property type="evidence" value="ECO:0007669"/>
    <property type="project" value="UniProtKB-UniRule"/>
</dbReference>
<dbReference type="GO" id="GO:0046168">
    <property type="term" value="P:glycerol-3-phosphate catabolic process"/>
    <property type="evidence" value="ECO:0007669"/>
    <property type="project" value="InterPro"/>
</dbReference>
<dbReference type="GO" id="GO:0006650">
    <property type="term" value="P:glycerophospholipid metabolic process"/>
    <property type="evidence" value="ECO:0007669"/>
    <property type="project" value="UniProtKB-UniRule"/>
</dbReference>
<dbReference type="GO" id="GO:0008654">
    <property type="term" value="P:phospholipid biosynthetic process"/>
    <property type="evidence" value="ECO:0007669"/>
    <property type="project" value="UniProtKB-KW"/>
</dbReference>
<dbReference type="FunFam" id="1.10.1040.10:FF:000001">
    <property type="entry name" value="Glycerol-3-phosphate dehydrogenase [NAD(P)+]"/>
    <property type="match status" value="1"/>
</dbReference>
<dbReference type="FunFam" id="3.40.50.720:FF:000019">
    <property type="entry name" value="Glycerol-3-phosphate dehydrogenase [NAD(P)+]"/>
    <property type="match status" value="1"/>
</dbReference>
<dbReference type="Gene3D" id="1.10.1040.10">
    <property type="entry name" value="N-(1-d-carboxylethyl)-l-norvaline Dehydrogenase, domain 2"/>
    <property type="match status" value="1"/>
</dbReference>
<dbReference type="Gene3D" id="3.40.50.720">
    <property type="entry name" value="NAD(P)-binding Rossmann-like Domain"/>
    <property type="match status" value="1"/>
</dbReference>
<dbReference type="HAMAP" id="MF_00394">
    <property type="entry name" value="NAD_Glyc3P_dehydrog"/>
    <property type="match status" value="1"/>
</dbReference>
<dbReference type="InterPro" id="IPR008927">
    <property type="entry name" value="6-PGluconate_DH-like_C_sf"/>
</dbReference>
<dbReference type="InterPro" id="IPR013328">
    <property type="entry name" value="6PGD_dom2"/>
</dbReference>
<dbReference type="InterPro" id="IPR006168">
    <property type="entry name" value="G3P_DH_NAD-dep"/>
</dbReference>
<dbReference type="InterPro" id="IPR006109">
    <property type="entry name" value="G3P_DH_NAD-dep_C"/>
</dbReference>
<dbReference type="InterPro" id="IPR011128">
    <property type="entry name" value="G3P_DH_NAD-dep_N"/>
</dbReference>
<dbReference type="InterPro" id="IPR036291">
    <property type="entry name" value="NAD(P)-bd_dom_sf"/>
</dbReference>
<dbReference type="NCBIfam" id="NF000940">
    <property type="entry name" value="PRK00094.1-2"/>
    <property type="match status" value="1"/>
</dbReference>
<dbReference type="NCBIfam" id="NF000941">
    <property type="entry name" value="PRK00094.1-3"/>
    <property type="match status" value="1"/>
</dbReference>
<dbReference type="NCBIfam" id="NF000942">
    <property type="entry name" value="PRK00094.1-4"/>
    <property type="match status" value="1"/>
</dbReference>
<dbReference type="PANTHER" id="PTHR11728">
    <property type="entry name" value="GLYCEROL-3-PHOSPHATE DEHYDROGENASE"/>
    <property type="match status" value="1"/>
</dbReference>
<dbReference type="PANTHER" id="PTHR11728:SF1">
    <property type="entry name" value="GLYCEROL-3-PHOSPHATE DEHYDROGENASE [NAD(+)] 2, CHLOROPLASTIC"/>
    <property type="match status" value="1"/>
</dbReference>
<dbReference type="Pfam" id="PF07479">
    <property type="entry name" value="NAD_Gly3P_dh_C"/>
    <property type="match status" value="1"/>
</dbReference>
<dbReference type="Pfam" id="PF01210">
    <property type="entry name" value="NAD_Gly3P_dh_N"/>
    <property type="match status" value="1"/>
</dbReference>
<dbReference type="PIRSF" id="PIRSF000114">
    <property type="entry name" value="Glycerol-3-P_dh"/>
    <property type="match status" value="1"/>
</dbReference>
<dbReference type="PRINTS" id="PR00077">
    <property type="entry name" value="GPDHDRGNASE"/>
</dbReference>
<dbReference type="SUPFAM" id="SSF48179">
    <property type="entry name" value="6-phosphogluconate dehydrogenase C-terminal domain-like"/>
    <property type="match status" value="1"/>
</dbReference>
<dbReference type="SUPFAM" id="SSF51735">
    <property type="entry name" value="NAD(P)-binding Rossmann-fold domains"/>
    <property type="match status" value="1"/>
</dbReference>
<dbReference type="PROSITE" id="PS00957">
    <property type="entry name" value="NAD_G3PDH"/>
    <property type="match status" value="1"/>
</dbReference>
<gene>
    <name evidence="1" type="primary">gpsA</name>
    <name type="ordered locus">EAT1b_2989</name>
</gene>
<name>GPDA_EXISA</name>
<keyword id="KW-0963">Cytoplasm</keyword>
<keyword id="KW-0444">Lipid biosynthesis</keyword>
<keyword id="KW-0443">Lipid metabolism</keyword>
<keyword id="KW-0520">NAD</keyword>
<keyword id="KW-0521">NADP</keyword>
<keyword id="KW-0547">Nucleotide-binding</keyword>
<keyword id="KW-0560">Oxidoreductase</keyword>
<keyword id="KW-0594">Phospholipid biosynthesis</keyword>
<keyword id="KW-1208">Phospholipid metabolism</keyword>